<comment type="function">
    <text evidence="1">Catalyzes the transfer of the phosphoribosyl group of 5-phosphorylribose-1-pyrophosphate (PRPP) to anthranilate to yield N-(5'-phosphoribosyl)-anthranilate (PRA).</text>
</comment>
<comment type="catalytic activity">
    <reaction evidence="1">
        <text>N-(5-phospho-beta-D-ribosyl)anthranilate + diphosphate = 5-phospho-alpha-D-ribose 1-diphosphate + anthranilate</text>
        <dbReference type="Rhea" id="RHEA:11768"/>
        <dbReference type="ChEBI" id="CHEBI:16567"/>
        <dbReference type="ChEBI" id="CHEBI:18277"/>
        <dbReference type="ChEBI" id="CHEBI:33019"/>
        <dbReference type="ChEBI" id="CHEBI:58017"/>
        <dbReference type="EC" id="2.4.2.18"/>
    </reaction>
</comment>
<comment type="cofactor">
    <cofactor evidence="1">
        <name>Mg(2+)</name>
        <dbReference type="ChEBI" id="CHEBI:18420"/>
    </cofactor>
    <text evidence="1">Binds 2 magnesium ions per monomer.</text>
</comment>
<comment type="pathway">
    <text evidence="1">Amino-acid biosynthesis; L-tryptophan biosynthesis; L-tryptophan from chorismate: step 2/5.</text>
</comment>
<comment type="subunit">
    <text evidence="1">Homodimer.</text>
</comment>
<comment type="similarity">
    <text evidence="1">Belongs to the anthranilate phosphoribosyltransferase family.</text>
</comment>
<sequence>MKQILYKLFEHQYLGRDEARTILQNIAQGKYNDAQVASLITVFLMRNISVEELCGFRDALLEMRVPVDLSEFAPIDIVGTGGDGKNTFNISTAACFTVAGAGFPVVKHGNYGATSVSGASNVMEQHGVKFTDHTDRLRRSMEKCNIAYLHAPLFNPALKAVAPIRKALAVRTFFNMLGPLVNPVIPTYQLLGVYNLPLLRLYTYTYQESATRFAVVHSLDGYDEISLTDEFKVATCGNEKIYTPESLGFNRCRESELDGGNTPEDAARIFDAVMEGTATEAQKNVVIVNAAFAIRVICPEKPIEECIALARESLESGKARETLKKFVELNG</sequence>
<gene>
    <name evidence="1" type="primary">trpD</name>
    <name type="ordered locus">BF2653</name>
</gene>
<accession>Q64SX6</accession>
<proteinExistence type="inferred from homology"/>
<protein>
    <recommendedName>
        <fullName evidence="1">Anthranilate phosphoribosyltransferase</fullName>
        <ecNumber evidence="1">2.4.2.18</ecNumber>
    </recommendedName>
</protein>
<keyword id="KW-0028">Amino-acid biosynthesis</keyword>
<keyword id="KW-0057">Aromatic amino acid biosynthesis</keyword>
<keyword id="KW-0328">Glycosyltransferase</keyword>
<keyword id="KW-0460">Magnesium</keyword>
<keyword id="KW-0479">Metal-binding</keyword>
<keyword id="KW-0808">Transferase</keyword>
<keyword id="KW-0822">Tryptophan biosynthesis</keyword>
<feature type="chain" id="PRO_1000099779" description="Anthranilate phosphoribosyltransferase">
    <location>
        <begin position="1"/>
        <end position="331"/>
    </location>
</feature>
<feature type="binding site" evidence="1">
    <location>
        <position position="79"/>
    </location>
    <ligand>
        <name>5-phospho-alpha-D-ribose 1-diphosphate</name>
        <dbReference type="ChEBI" id="CHEBI:58017"/>
    </ligand>
</feature>
<feature type="binding site" evidence="1">
    <location>
        <position position="79"/>
    </location>
    <ligand>
        <name>anthranilate</name>
        <dbReference type="ChEBI" id="CHEBI:16567"/>
        <label>1</label>
    </ligand>
</feature>
<feature type="binding site" evidence="1">
    <location>
        <begin position="82"/>
        <end position="83"/>
    </location>
    <ligand>
        <name>5-phospho-alpha-D-ribose 1-diphosphate</name>
        <dbReference type="ChEBI" id="CHEBI:58017"/>
    </ligand>
</feature>
<feature type="binding site" evidence="1">
    <location>
        <position position="87"/>
    </location>
    <ligand>
        <name>5-phospho-alpha-D-ribose 1-diphosphate</name>
        <dbReference type="ChEBI" id="CHEBI:58017"/>
    </ligand>
</feature>
<feature type="binding site" evidence="1">
    <location>
        <begin position="89"/>
        <end position="92"/>
    </location>
    <ligand>
        <name>5-phospho-alpha-D-ribose 1-diphosphate</name>
        <dbReference type="ChEBI" id="CHEBI:58017"/>
    </ligand>
</feature>
<feature type="binding site" evidence="1">
    <location>
        <position position="91"/>
    </location>
    <ligand>
        <name>Mg(2+)</name>
        <dbReference type="ChEBI" id="CHEBI:18420"/>
        <label>1</label>
    </ligand>
</feature>
<feature type="binding site" evidence="1">
    <location>
        <begin position="107"/>
        <end position="115"/>
    </location>
    <ligand>
        <name>5-phospho-alpha-D-ribose 1-diphosphate</name>
        <dbReference type="ChEBI" id="CHEBI:58017"/>
    </ligand>
</feature>
<feature type="binding site" evidence="1">
    <location>
        <position position="110"/>
    </location>
    <ligand>
        <name>anthranilate</name>
        <dbReference type="ChEBI" id="CHEBI:16567"/>
        <label>1</label>
    </ligand>
</feature>
<feature type="binding site" evidence="1">
    <location>
        <position position="119"/>
    </location>
    <ligand>
        <name>5-phospho-alpha-D-ribose 1-diphosphate</name>
        <dbReference type="ChEBI" id="CHEBI:58017"/>
    </ligand>
</feature>
<feature type="binding site" evidence="1">
    <location>
        <position position="165"/>
    </location>
    <ligand>
        <name>anthranilate</name>
        <dbReference type="ChEBI" id="CHEBI:16567"/>
        <label>2</label>
    </ligand>
</feature>
<feature type="binding site" evidence="1">
    <location>
        <position position="223"/>
    </location>
    <ligand>
        <name>Mg(2+)</name>
        <dbReference type="ChEBI" id="CHEBI:18420"/>
        <label>2</label>
    </ligand>
</feature>
<feature type="binding site" evidence="1">
    <location>
        <position position="224"/>
    </location>
    <ligand>
        <name>Mg(2+)</name>
        <dbReference type="ChEBI" id="CHEBI:18420"/>
        <label>1</label>
    </ligand>
</feature>
<feature type="binding site" evidence="1">
    <location>
        <position position="224"/>
    </location>
    <ligand>
        <name>Mg(2+)</name>
        <dbReference type="ChEBI" id="CHEBI:18420"/>
        <label>2</label>
    </ligand>
</feature>
<reference key="1">
    <citation type="journal article" date="2004" name="Proc. Natl. Acad. Sci. U.S.A.">
        <title>Genomic analysis of Bacteroides fragilis reveals extensive DNA inversions regulating cell surface adaptation.</title>
        <authorList>
            <person name="Kuwahara T."/>
            <person name="Yamashita A."/>
            <person name="Hirakawa H."/>
            <person name="Nakayama H."/>
            <person name="Toh H."/>
            <person name="Okada N."/>
            <person name="Kuhara S."/>
            <person name="Hattori M."/>
            <person name="Hayashi T."/>
            <person name="Ohnishi Y."/>
        </authorList>
    </citation>
    <scope>NUCLEOTIDE SEQUENCE [LARGE SCALE GENOMIC DNA]</scope>
    <source>
        <strain>YCH46</strain>
    </source>
</reference>
<name>TRPD_BACFR</name>
<organism>
    <name type="scientific">Bacteroides fragilis (strain YCH46)</name>
    <dbReference type="NCBI Taxonomy" id="295405"/>
    <lineage>
        <taxon>Bacteria</taxon>
        <taxon>Pseudomonadati</taxon>
        <taxon>Bacteroidota</taxon>
        <taxon>Bacteroidia</taxon>
        <taxon>Bacteroidales</taxon>
        <taxon>Bacteroidaceae</taxon>
        <taxon>Bacteroides</taxon>
    </lineage>
</organism>
<evidence type="ECO:0000255" key="1">
    <source>
        <dbReference type="HAMAP-Rule" id="MF_00211"/>
    </source>
</evidence>
<dbReference type="EC" id="2.4.2.18" evidence="1"/>
<dbReference type="EMBL" id="AP006841">
    <property type="protein sequence ID" value="BAD49403.1"/>
    <property type="molecule type" value="Genomic_DNA"/>
</dbReference>
<dbReference type="RefSeq" id="WP_005803789.1">
    <property type="nucleotide sequence ID" value="NC_006347.1"/>
</dbReference>
<dbReference type="RefSeq" id="YP_099937.1">
    <property type="nucleotide sequence ID" value="NC_006347.1"/>
</dbReference>
<dbReference type="SMR" id="Q64SX6"/>
<dbReference type="STRING" id="295405.BF2653"/>
<dbReference type="KEGG" id="bfr:BF2653"/>
<dbReference type="PATRIC" id="fig|295405.11.peg.2565"/>
<dbReference type="HOGENOM" id="CLU_034315_3_1_10"/>
<dbReference type="OrthoDB" id="9806430at2"/>
<dbReference type="UniPathway" id="UPA00035">
    <property type="reaction ID" value="UER00041"/>
</dbReference>
<dbReference type="Proteomes" id="UP000002197">
    <property type="component" value="Chromosome"/>
</dbReference>
<dbReference type="GO" id="GO:0005829">
    <property type="term" value="C:cytosol"/>
    <property type="evidence" value="ECO:0007669"/>
    <property type="project" value="TreeGrafter"/>
</dbReference>
<dbReference type="GO" id="GO:0004048">
    <property type="term" value="F:anthranilate phosphoribosyltransferase activity"/>
    <property type="evidence" value="ECO:0007669"/>
    <property type="project" value="UniProtKB-UniRule"/>
</dbReference>
<dbReference type="GO" id="GO:0000287">
    <property type="term" value="F:magnesium ion binding"/>
    <property type="evidence" value="ECO:0007669"/>
    <property type="project" value="UniProtKB-UniRule"/>
</dbReference>
<dbReference type="GO" id="GO:0000162">
    <property type="term" value="P:L-tryptophan biosynthetic process"/>
    <property type="evidence" value="ECO:0007669"/>
    <property type="project" value="UniProtKB-UniRule"/>
</dbReference>
<dbReference type="FunFam" id="1.20.970.10:FF:000008">
    <property type="entry name" value="Anthranilate phosphoribosyltransferase"/>
    <property type="match status" value="1"/>
</dbReference>
<dbReference type="Gene3D" id="3.40.1030.10">
    <property type="entry name" value="Nucleoside phosphorylase/phosphoribosyltransferase catalytic domain"/>
    <property type="match status" value="1"/>
</dbReference>
<dbReference type="Gene3D" id="1.20.970.10">
    <property type="entry name" value="Transferase, Pyrimidine Nucleoside Phosphorylase, Chain C"/>
    <property type="match status" value="1"/>
</dbReference>
<dbReference type="HAMAP" id="MF_00211">
    <property type="entry name" value="TrpD"/>
    <property type="match status" value="1"/>
</dbReference>
<dbReference type="InterPro" id="IPR005940">
    <property type="entry name" value="Anthranilate_Pribosyl_Tfrase"/>
</dbReference>
<dbReference type="InterPro" id="IPR000312">
    <property type="entry name" value="Glycosyl_Trfase_fam3"/>
</dbReference>
<dbReference type="InterPro" id="IPR017459">
    <property type="entry name" value="Glycosyl_Trfase_fam3_N_dom"/>
</dbReference>
<dbReference type="InterPro" id="IPR036320">
    <property type="entry name" value="Glycosyl_Trfase_fam3_N_dom_sf"/>
</dbReference>
<dbReference type="InterPro" id="IPR035902">
    <property type="entry name" value="Nuc_phospho_transferase"/>
</dbReference>
<dbReference type="NCBIfam" id="TIGR01245">
    <property type="entry name" value="trpD"/>
    <property type="match status" value="1"/>
</dbReference>
<dbReference type="PANTHER" id="PTHR43285">
    <property type="entry name" value="ANTHRANILATE PHOSPHORIBOSYLTRANSFERASE"/>
    <property type="match status" value="1"/>
</dbReference>
<dbReference type="PANTHER" id="PTHR43285:SF2">
    <property type="entry name" value="ANTHRANILATE PHOSPHORIBOSYLTRANSFERASE"/>
    <property type="match status" value="1"/>
</dbReference>
<dbReference type="Pfam" id="PF02885">
    <property type="entry name" value="Glycos_trans_3N"/>
    <property type="match status" value="1"/>
</dbReference>
<dbReference type="Pfam" id="PF00591">
    <property type="entry name" value="Glycos_transf_3"/>
    <property type="match status" value="1"/>
</dbReference>
<dbReference type="SUPFAM" id="SSF52418">
    <property type="entry name" value="Nucleoside phosphorylase/phosphoribosyltransferase catalytic domain"/>
    <property type="match status" value="1"/>
</dbReference>
<dbReference type="SUPFAM" id="SSF47648">
    <property type="entry name" value="Nucleoside phosphorylase/phosphoribosyltransferase N-terminal domain"/>
    <property type="match status" value="1"/>
</dbReference>